<protein>
    <recommendedName>
        <fullName>Serine/threonine-protein kinase ICK</fullName>
        <ecNumber evidence="9">2.7.11.1</ecNumber>
    </recommendedName>
    <alternativeName>
        <fullName>Intestinal cell kinase</fullName>
        <shortName>mICK</shortName>
    </alternativeName>
    <alternativeName>
        <fullName>MAK-related kinase</fullName>
        <shortName>MRK</shortName>
    </alternativeName>
</protein>
<organism evidence="14">
    <name type="scientific">Mus musculus</name>
    <name type="common">Mouse</name>
    <dbReference type="NCBI Taxonomy" id="10090"/>
    <lineage>
        <taxon>Eukaryota</taxon>
        <taxon>Metazoa</taxon>
        <taxon>Chordata</taxon>
        <taxon>Craniata</taxon>
        <taxon>Vertebrata</taxon>
        <taxon>Euteleostomi</taxon>
        <taxon>Mammalia</taxon>
        <taxon>Eutheria</taxon>
        <taxon>Euarchontoglires</taxon>
        <taxon>Glires</taxon>
        <taxon>Rodentia</taxon>
        <taxon>Myomorpha</taxon>
        <taxon>Muroidea</taxon>
        <taxon>Muridae</taxon>
        <taxon>Murinae</taxon>
        <taxon>Mus</taxon>
        <taxon>Mus</taxon>
    </lineage>
</organism>
<proteinExistence type="evidence at protein level"/>
<accession>Q9JKV2</accession>
<accession>Q8K138</accession>
<name>CILK1_MOUSE</name>
<dbReference type="EC" id="2.7.11.1" evidence="9"/>
<dbReference type="EMBL" id="AF225918">
    <property type="protein sequence ID" value="AAF37277.1"/>
    <property type="molecule type" value="mRNA"/>
</dbReference>
<dbReference type="EMBL" id="BC028863">
    <property type="protein sequence ID" value="AAH28863.1"/>
    <property type="molecule type" value="mRNA"/>
</dbReference>
<dbReference type="CCDS" id="CCDS40697.1"/>
<dbReference type="RefSeq" id="NP_001157252.1">
    <property type="nucleotide sequence ID" value="NM_001163780.1"/>
</dbReference>
<dbReference type="RefSeq" id="NP_064371.2">
    <property type="nucleotide sequence ID" value="NM_019987.2"/>
</dbReference>
<dbReference type="RefSeq" id="XP_006511367.1">
    <property type="nucleotide sequence ID" value="XM_006511304.2"/>
</dbReference>
<dbReference type="SMR" id="Q9JKV2"/>
<dbReference type="FunCoup" id="Q9JKV2">
    <property type="interactions" value="1245"/>
</dbReference>
<dbReference type="STRING" id="10090.ENSMUSP00000048234"/>
<dbReference type="GlyGen" id="Q9JKV2">
    <property type="glycosylation" value="1 site, 1 O-linked glycan (1 site)"/>
</dbReference>
<dbReference type="iPTMnet" id="Q9JKV2"/>
<dbReference type="PhosphoSitePlus" id="Q9JKV2"/>
<dbReference type="jPOST" id="Q9JKV2"/>
<dbReference type="PaxDb" id="10090-ENSMUSP00000048234"/>
<dbReference type="ProteomicsDB" id="267186"/>
<dbReference type="ABCD" id="Q9JKV2">
    <property type="antibodies" value="1 sequenced antibody"/>
</dbReference>
<dbReference type="Antibodypedia" id="605">
    <property type="antibodies" value="292 antibodies from 24 providers"/>
</dbReference>
<dbReference type="DNASU" id="56542"/>
<dbReference type="Ensembl" id="ENSMUST00000044551.8">
    <property type="protein sequence ID" value="ENSMUSP00000048234.8"/>
    <property type="gene ID" value="ENSMUSG00000009828.16"/>
</dbReference>
<dbReference type="Ensembl" id="ENSMUST00000118869.8">
    <property type="protein sequence ID" value="ENSMUSP00000112961.2"/>
    <property type="gene ID" value="ENSMUSG00000009828.16"/>
</dbReference>
<dbReference type="GeneID" id="56542"/>
<dbReference type="KEGG" id="mmu:56542"/>
<dbReference type="UCSC" id="uc009qtt.2">
    <property type="organism name" value="mouse"/>
</dbReference>
<dbReference type="AGR" id="MGI:1934157"/>
<dbReference type="CTD" id="22858"/>
<dbReference type="MGI" id="MGI:1934157">
    <property type="gene designation" value="Cilk1"/>
</dbReference>
<dbReference type="VEuPathDB" id="HostDB:ENSMUSG00000009828"/>
<dbReference type="eggNOG" id="KOG0661">
    <property type="taxonomic scope" value="Eukaryota"/>
</dbReference>
<dbReference type="GeneTree" id="ENSGT00940000158807"/>
<dbReference type="InParanoid" id="Q9JKV2"/>
<dbReference type="OMA" id="ELIAIKX"/>
<dbReference type="OrthoDB" id="2158884at2759"/>
<dbReference type="PhylomeDB" id="Q9JKV2"/>
<dbReference type="TreeFam" id="TF328769"/>
<dbReference type="BioGRID-ORCS" id="56542">
    <property type="hits" value="4 hits in 80 CRISPR screens"/>
</dbReference>
<dbReference type="PRO" id="PR:Q9JKV2"/>
<dbReference type="Proteomes" id="UP000000589">
    <property type="component" value="Chromosome 9"/>
</dbReference>
<dbReference type="RNAct" id="Q9JKV2">
    <property type="molecule type" value="protein"/>
</dbReference>
<dbReference type="Bgee" id="ENSMUSG00000009828">
    <property type="expression patterns" value="Expressed in trigeminal ganglion and 240 other cell types or tissues"/>
</dbReference>
<dbReference type="ExpressionAtlas" id="Q9JKV2">
    <property type="expression patterns" value="baseline and differential"/>
</dbReference>
<dbReference type="GO" id="GO:0036064">
    <property type="term" value="C:ciliary basal body"/>
    <property type="evidence" value="ECO:0000314"/>
    <property type="project" value="UniProtKB"/>
</dbReference>
<dbReference type="GO" id="GO:0097546">
    <property type="term" value="C:ciliary base"/>
    <property type="evidence" value="ECO:0000314"/>
    <property type="project" value="UniProtKB"/>
</dbReference>
<dbReference type="GO" id="GO:0097542">
    <property type="term" value="C:ciliary tip"/>
    <property type="evidence" value="ECO:0000315"/>
    <property type="project" value="UniProtKB"/>
</dbReference>
<dbReference type="GO" id="GO:0005929">
    <property type="term" value="C:cilium"/>
    <property type="evidence" value="ECO:0000314"/>
    <property type="project" value="UniProtKB"/>
</dbReference>
<dbReference type="GO" id="GO:0005829">
    <property type="term" value="C:cytosol"/>
    <property type="evidence" value="ECO:0007669"/>
    <property type="project" value="UniProtKB-SubCell"/>
</dbReference>
<dbReference type="GO" id="GO:0005634">
    <property type="term" value="C:nucleus"/>
    <property type="evidence" value="ECO:0000314"/>
    <property type="project" value="UniProtKB"/>
</dbReference>
<dbReference type="GO" id="GO:0005524">
    <property type="term" value="F:ATP binding"/>
    <property type="evidence" value="ECO:0000250"/>
    <property type="project" value="UniProtKB"/>
</dbReference>
<dbReference type="GO" id="GO:0000287">
    <property type="term" value="F:magnesium ion binding"/>
    <property type="evidence" value="ECO:0000250"/>
    <property type="project" value="UniProtKB"/>
</dbReference>
<dbReference type="GO" id="GO:0106310">
    <property type="term" value="F:protein serine kinase activity"/>
    <property type="evidence" value="ECO:0007669"/>
    <property type="project" value="RHEA"/>
</dbReference>
<dbReference type="GO" id="GO:0004674">
    <property type="term" value="F:protein serine/threonine kinase activity"/>
    <property type="evidence" value="ECO:0000314"/>
    <property type="project" value="MGI"/>
</dbReference>
<dbReference type="GO" id="GO:0060271">
    <property type="term" value="P:cilium assembly"/>
    <property type="evidence" value="ECO:0000315"/>
    <property type="project" value="UniProtKB"/>
</dbReference>
<dbReference type="GO" id="GO:0035556">
    <property type="term" value="P:intracellular signal transduction"/>
    <property type="evidence" value="ECO:0000250"/>
    <property type="project" value="UniProtKB"/>
</dbReference>
<dbReference type="GO" id="GO:0035720">
    <property type="term" value="P:intraciliary anterograde transport"/>
    <property type="evidence" value="ECO:0000315"/>
    <property type="project" value="UniProtKB"/>
</dbReference>
<dbReference type="GO" id="GO:0035721">
    <property type="term" value="P:intraciliary retrograde transport"/>
    <property type="evidence" value="ECO:0000315"/>
    <property type="project" value="UniProtKB"/>
</dbReference>
<dbReference type="GO" id="GO:0042073">
    <property type="term" value="P:intraciliary transport"/>
    <property type="evidence" value="ECO:0000315"/>
    <property type="project" value="UniProtKB"/>
</dbReference>
<dbReference type="GO" id="GO:0006468">
    <property type="term" value="P:protein phosphorylation"/>
    <property type="evidence" value="ECO:0000314"/>
    <property type="project" value="UniProtKB"/>
</dbReference>
<dbReference type="GO" id="GO:0007165">
    <property type="term" value="P:signal transduction"/>
    <property type="evidence" value="ECO:0000304"/>
    <property type="project" value="MGI"/>
</dbReference>
<dbReference type="CDD" id="cd07830">
    <property type="entry name" value="STKc_MAK_like"/>
    <property type="match status" value="1"/>
</dbReference>
<dbReference type="FunFam" id="1.10.510.10:FF:000104">
    <property type="entry name" value="serine/threonine-protein kinase MAK isoform X1"/>
    <property type="match status" value="1"/>
</dbReference>
<dbReference type="FunFam" id="3.30.200.20:FF:000071">
    <property type="entry name" value="serine/threonine-protein kinase MAK isoform X1"/>
    <property type="match status" value="1"/>
</dbReference>
<dbReference type="Gene3D" id="3.30.200.20">
    <property type="entry name" value="Phosphorylase Kinase, domain 1"/>
    <property type="match status" value="1"/>
</dbReference>
<dbReference type="Gene3D" id="1.10.510.10">
    <property type="entry name" value="Transferase(Phosphotransferase) domain 1"/>
    <property type="match status" value="1"/>
</dbReference>
<dbReference type="InterPro" id="IPR011009">
    <property type="entry name" value="Kinase-like_dom_sf"/>
</dbReference>
<dbReference type="InterPro" id="IPR050117">
    <property type="entry name" value="MAP_kinase"/>
</dbReference>
<dbReference type="InterPro" id="IPR000719">
    <property type="entry name" value="Prot_kinase_dom"/>
</dbReference>
<dbReference type="InterPro" id="IPR017441">
    <property type="entry name" value="Protein_kinase_ATP_BS"/>
</dbReference>
<dbReference type="InterPro" id="IPR008271">
    <property type="entry name" value="Ser/Thr_kinase_AS"/>
</dbReference>
<dbReference type="PANTHER" id="PTHR24055">
    <property type="entry name" value="MITOGEN-ACTIVATED PROTEIN KINASE"/>
    <property type="match status" value="1"/>
</dbReference>
<dbReference type="Pfam" id="PF00069">
    <property type="entry name" value="Pkinase"/>
    <property type="match status" value="1"/>
</dbReference>
<dbReference type="SMART" id="SM00220">
    <property type="entry name" value="S_TKc"/>
    <property type="match status" value="1"/>
</dbReference>
<dbReference type="SUPFAM" id="SSF56112">
    <property type="entry name" value="Protein kinase-like (PK-like)"/>
    <property type="match status" value="1"/>
</dbReference>
<dbReference type="PROSITE" id="PS00107">
    <property type="entry name" value="PROTEIN_KINASE_ATP"/>
    <property type="match status" value="1"/>
</dbReference>
<dbReference type="PROSITE" id="PS50011">
    <property type="entry name" value="PROTEIN_KINASE_DOM"/>
    <property type="match status" value="1"/>
</dbReference>
<dbReference type="PROSITE" id="PS00108">
    <property type="entry name" value="PROTEIN_KINASE_ST"/>
    <property type="match status" value="1"/>
</dbReference>
<keyword id="KW-0067">ATP-binding</keyword>
<keyword id="KW-0966">Cell projection</keyword>
<keyword id="KW-0970">Cilium biogenesis/degradation</keyword>
<keyword id="KW-0963">Cytoplasm</keyword>
<keyword id="KW-0206">Cytoskeleton</keyword>
<keyword id="KW-0217">Developmental protein</keyword>
<keyword id="KW-0903">Direct protein sequencing</keyword>
<keyword id="KW-0418">Kinase</keyword>
<keyword id="KW-0460">Magnesium</keyword>
<keyword id="KW-0479">Metal-binding</keyword>
<keyword id="KW-0547">Nucleotide-binding</keyword>
<keyword id="KW-0539">Nucleus</keyword>
<keyword id="KW-0597">Phosphoprotein</keyword>
<keyword id="KW-1185">Reference proteome</keyword>
<keyword id="KW-0723">Serine/threonine-protein kinase</keyword>
<keyword id="KW-0808">Transferase</keyword>
<feature type="chain" id="PRO_0000086008" description="Serine/threonine-protein kinase ICK">
    <location>
        <begin position="1"/>
        <end position="629"/>
    </location>
</feature>
<feature type="domain" description="Protein kinase" evidence="4 13">
    <location>
        <begin position="4"/>
        <end position="284"/>
    </location>
</feature>
<feature type="region of interest" description="Disordered" evidence="6">
    <location>
        <begin position="292"/>
        <end position="376"/>
    </location>
</feature>
<feature type="region of interest" description="Disordered" evidence="6">
    <location>
        <begin position="455"/>
        <end position="483"/>
    </location>
</feature>
<feature type="region of interest" description="Disordered" evidence="6">
    <location>
        <begin position="581"/>
        <end position="629"/>
    </location>
</feature>
<feature type="compositionally biased region" description="Basic and acidic residues" evidence="6">
    <location>
        <begin position="296"/>
        <end position="306"/>
    </location>
</feature>
<feature type="compositionally biased region" description="Pro residues" evidence="6">
    <location>
        <begin position="309"/>
        <end position="321"/>
    </location>
</feature>
<feature type="compositionally biased region" description="Low complexity" evidence="6">
    <location>
        <begin position="322"/>
        <end position="344"/>
    </location>
</feature>
<feature type="compositionally biased region" description="Low complexity" evidence="6">
    <location>
        <begin position="457"/>
        <end position="470"/>
    </location>
</feature>
<feature type="active site" description="Proton acceptor" evidence="4 5">
    <location>
        <position position="125"/>
    </location>
</feature>
<feature type="binding site" evidence="1 4">
    <location>
        <begin position="10"/>
        <end position="18"/>
    </location>
    <ligand>
        <name>ATP</name>
        <dbReference type="ChEBI" id="CHEBI:30616"/>
    </ligand>
</feature>
<feature type="binding site" evidence="3 4">
    <location>
        <position position="33"/>
    </location>
    <ligand>
        <name>ATP</name>
        <dbReference type="ChEBI" id="CHEBI:30616"/>
    </ligand>
</feature>
<feature type="modified residue" description="Phosphothreonine; by CDK7" evidence="8 16">
    <location>
        <position position="157"/>
    </location>
</feature>
<feature type="modified residue" description="Phosphotyrosine" evidence="8 16">
    <location>
        <position position="159"/>
    </location>
</feature>
<feature type="modified residue" description="Phosphoserine" evidence="8">
    <location>
        <position position="161"/>
    </location>
</feature>
<feature type="mutagenesis site" description="No effect on cilium length." evidence="11">
    <original>K</original>
    <variation>M</variation>
    <location>
        <position position="33"/>
    </location>
</feature>
<feature type="mutagenesis site" description="Loss of kinase activity; no effect on nuclear subcellular location." evidence="8">
    <original>K</original>
    <variation>R</variation>
    <location>
        <position position="33"/>
    </location>
</feature>
<feature type="mutagenesis site" description="Loss of kinase activity and of autophosphorylation; loss of phosphorylation by CDK7; no effect on nuclear subcellular location." evidence="8">
    <original>TDY</original>
    <variation>ADF</variation>
    <location>
        <begin position="157"/>
        <end position="159"/>
    </location>
</feature>
<feature type="mutagenesis site" description="Loss of kinase activity; loss of phosphorylation by CDK7; no effect on autophosphorylation." evidence="8">
    <original>T</original>
    <variation>A</variation>
    <location>
        <position position="157"/>
    </location>
</feature>
<feature type="mutagenesis site" description="Loss of kinase activity and of autophosphorylation; no effect on phosphorylation by CDK7." evidence="8">
    <original>Y</original>
    <variation>F</variation>
    <location>
        <position position="159"/>
    </location>
</feature>
<feature type="mutagenesis site" description="Complete loss of kinase activity and of nuclear localization." evidence="8">
    <original>E</original>
    <variation>A</variation>
    <location>
        <position position="169"/>
    </location>
</feature>
<feature type="mutagenesis site" description="Complete loss of kinase activity and of nuclear localization." evidence="8">
    <original>W</original>
    <variation>A</variation>
    <location>
        <position position="184"/>
    </location>
</feature>
<feature type="mutagenesis site" description="Partial loss of autocatalytic kinase activity. Complete loss of kinase activity and of nuclear localization; when associated with A-271 and A-272." evidence="8">
    <original>K</original>
    <variation>A</variation>
    <location>
        <position position="270"/>
    </location>
</feature>
<feature type="mutagenesis site" description="Partial loss of kinase activity. Complete loss of kinase activity and of nuclear localization; when associated with A-270 and A-272." evidence="8">
    <original>K</original>
    <variation>A</variation>
    <location>
        <position position="271"/>
    </location>
</feature>
<feature type="mutagenesis site" description="Complete loss of kinase activity and of nuclear localization. Complete loss of kinase activity and of nuclear localization; when associated with A-270 and A-272." evidence="8">
    <original>R</original>
    <variation>A</variation>
    <location>
        <position position="272"/>
    </location>
</feature>
<feature type="sequence conflict" description="In Ref. 1; AAF37277." evidence="13" ref="1">
    <original>S</original>
    <variation>R</variation>
    <location>
        <position position="533"/>
    </location>
</feature>
<feature type="sequence conflict" description="In Ref. 1; AAF37277." evidence="13" ref="1">
    <original>H</original>
    <variation>L</variation>
    <location>
        <position position="616"/>
    </location>
</feature>
<comment type="function">
    <text evidence="2 9 10 11">Has an essential role in ciliogenesis, particularly in neuronal and retinal progenitor cells (PubMed:24797473). Phosphorylates KIF3A (PubMed:24797473). Involved in the control of ciliary length (PubMed:24853502). Regulates the ciliary localization of SHH pathway components as well as the localization of IFT components at ciliary tips (PubMed:24797473, PubMed:24853502). May play a role in cardiac development (By similarity). Regulates intraflagellar transport (IFT) speed and negatively regulates cilium length in a cAMP and mTORC1 signaling -dependent manner and this regulation requires its kinase activity (PubMed:25243405).</text>
</comment>
<comment type="catalytic activity">
    <reaction evidence="8 9">
        <text>L-seryl-[protein] + ATP = O-phospho-L-seryl-[protein] + ADP + H(+)</text>
        <dbReference type="Rhea" id="RHEA:17989"/>
        <dbReference type="Rhea" id="RHEA-COMP:9863"/>
        <dbReference type="Rhea" id="RHEA-COMP:11604"/>
        <dbReference type="ChEBI" id="CHEBI:15378"/>
        <dbReference type="ChEBI" id="CHEBI:29999"/>
        <dbReference type="ChEBI" id="CHEBI:30616"/>
        <dbReference type="ChEBI" id="CHEBI:83421"/>
        <dbReference type="ChEBI" id="CHEBI:456216"/>
        <dbReference type="EC" id="2.7.11.1"/>
    </reaction>
</comment>
<comment type="catalytic activity">
    <reaction evidence="8 9">
        <text>L-threonyl-[protein] + ATP = O-phospho-L-threonyl-[protein] + ADP + H(+)</text>
        <dbReference type="Rhea" id="RHEA:46608"/>
        <dbReference type="Rhea" id="RHEA-COMP:11060"/>
        <dbReference type="Rhea" id="RHEA-COMP:11605"/>
        <dbReference type="ChEBI" id="CHEBI:15378"/>
        <dbReference type="ChEBI" id="CHEBI:30013"/>
        <dbReference type="ChEBI" id="CHEBI:30616"/>
        <dbReference type="ChEBI" id="CHEBI:61977"/>
        <dbReference type="ChEBI" id="CHEBI:456216"/>
        <dbReference type="EC" id="2.7.11.1"/>
    </reaction>
</comment>
<comment type="cofactor">
    <cofactor evidence="9">
        <name>Mg(2+)</name>
        <dbReference type="ChEBI" id="CHEBI:18420"/>
    </cofactor>
</comment>
<comment type="subcellular location">
    <subcellularLocation>
        <location evidence="2">Cytoplasm</location>
        <location evidence="2">Cytosol</location>
    </subcellularLocation>
    <subcellularLocation>
        <location evidence="9 11">Cell projection</location>
        <location evidence="9 11">Cilium</location>
    </subcellularLocation>
    <subcellularLocation>
        <location evidence="8 11">Nucleus</location>
    </subcellularLocation>
    <subcellularLocation>
        <location evidence="10">Cytoplasm</location>
        <location evidence="10">Cytoskeleton</location>
        <location evidence="10">Cilium basal body</location>
    </subcellularLocation>
    <text evidence="8 9">Also found at the ciliary tip (PubMed:24797473). Predominant nuclear localization has been observed with a N-terminally GFP-tagged construct in transfected COS-7 cells (PubMed:15988018).</text>
</comment>
<comment type="tissue specificity">
    <text evidence="7">Highly expressed in colon and lung, lower levels present in heart, esophagus, stomach, small intestine and ovary. Localizes to the crypt region of large and small intestine.</text>
</comment>
<comment type="developmental stage">
    <text evidence="12">At 14.5 dpc, expressed in the brain cortex, including the cortical plate, intermediate zone, and ventricular and subventricular zones.</text>
</comment>
<comment type="PTM">
    <text evidence="8">Autophosphorylated on serine and threonine residues. Phosphorylation at Thr-157 by CDK7/Cak1p increases kinase activity.</text>
</comment>
<comment type="disruption phenotype">
    <text evidence="10">Knockout mice manifest hydrocephalus, polydactyly, and delayed skeletal development. At cellular levels, ICK knockout results in abnormally elongated cilia and compromised SHH signaling.</text>
</comment>
<comment type="similarity">
    <text evidence="13">Belongs to the protein kinase superfamily. CMGC Ser/Thr protein kinase family. CDC2/CDKX subfamily.</text>
</comment>
<sequence length="629" mass="70592">MNRYTTIKQLGDGTYGSVLLGRSIESGELIAIKKMKRKFYSWEECMNLREVKSLKKLNHANIVKLKEVIRENDHLYFIFEYMKENLYQLIKERNKLFPESAIRNIMYQILQGLAFIHKHGFFHRDLKPENLLCMGPELVKIADFGLAREIRSRPPYTDYVSTRWYRAPEVLLRSTNYSSPIDIWAVGCIMAEVYTLRPLFPGASEIDTIFKICQVLGTPKKTDWPEGYQLSSAMNFLWPQCIPNNLKTLIPNASSEAIQLLRDLLQWDPKKRPTASQALRYPYFQIGHPLGIISKDSGKPQREVQDKTGPPPYIKPAPPAQAPAKAYTLISSRPSQASQPPQHSVHPYKGDVSRTEQLSHVQEGKPSPPFFPSLHNKNLQPKILASLEQKNGEIKPKSRRRWGLISRSTKGSDDWADLDDLDFSPSLTRIDVKNKKRQSDDTLCRFESVLDLKPSESVGTGTTVSTQASSQRRDTPTLQSSAKQHYLKHSRYLPGINIRNGVLPNPGKDFLPSNSWSSSGLSGKSSGTVSVVSKITSVGSGSASSSGLTGSYIPSFLKKEIGSVMQRVQLAPLAAPPPGYSSLKAVRPHPGRPFFHTQPRSTPGLIPRPPAAQPVHGRIDWSSKYPSRR</sequence>
<reference evidence="13" key="1">
    <citation type="journal article" date="2000" name="J. Cell. Physiol.">
        <title>Intestinal cell kinase (ICK) localizes to the crypt region and requires a dual phosphorylation site found in map kinases.</title>
        <authorList>
            <person name="Togawa K."/>
            <person name="Yan Y.-X."/>
            <person name="Inomoto T."/>
            <person name="Slaugenhaupt S.A."/>
            <person name="Rustgi A.K."/>
        </authorList>
    </citation>
    <scope>NUCLEOTIDE SEQUENCE [MRNA]</scope>
    <scope>TISSUE SPECIFICITY</scope>
    <source>
        <tissue evidence="7">Ileum</tissue>
        <tissue evidence="7">Jejunum</tissue>
    </source>
</reference>
<reference evidence="13" key="2">
    <citation type="journal article" date="2004" name="Genome Res.">
        <title>The status, quality, and expansion of the NIH full-length cDNA project: the Mammalian Gene Collection (MGC).</title>
        <authorList>
            <consortium name="The MGC Project Team"/>
        </authorList>
    </citation>
    <scope>NUCLEOTIDE SEQUENCE [LARGE SCALE MRNA]</scope>
    <source>
        <tissue evidence="15">Colon</tissue>
    </source>
</reference>
<reference key="3">
    <citation type="journal article" date="2005" name="Mol. Cell. Biol.">
        <title>Activation of a nuclear Cdc2-related kinase within a mitogen-activated protein kinase-like TDY motif by autophosphorylation and cyclin-dependent protein kinase-activating kinase.</title>
        <authorList>
            <person name="Fu Z."/>
            <person name="Schroeder M.J."/>
            <person name="Shabanowitz J."/>
            <person name="Kaldis P."/>
            <person name="Togawa K."/>
            <person name="Rustgi A.K."/>
            <person name="Hunt D.F."/>
            <person name="Sturgill T.W."/>
        </authorList>
    </citation>
    <scope>PROTEIN SEQUENCE OF 152-163</scope>
    <scope>SUBCELLULAR LOCATION</scope>
    <scope>CATALYTIC ACTIVITY</scope>
    <scope>AUTOPHOSPHORYLATION</scope>
    <scope>MUTAGENESIS OF LYS-33; 157-THR--TYR-159; GLU-169; TRP-184; LYS-270; LYS-271 AND ARG-272</scope>
    <scope>PHOSPHORYLATION AT THR-157 AND TYR-159</scope>
    <scope>MASS SPECTROMETRY</scope>
</reference>
<reference key="4">
    <citation type="journal article" date="2010" name="Cell">
        <title>A tissue-specific atlas of mouse protein phosphorylation and expression.</title>
        <authorList>
            <person name="Huttlin E.L."/>
            <person name="Jedrychowski M.P."/>
            <person name="Elias J.E."/>
            <person name="Goswami T."/>
            <person name="Rad R."/>
            <person name="Beausoleil S.A."/>
            <person name="Villen J."/>
            <person name="Haas W."/>
            <person name="Sowa M.E."/>
            <person name="Gygi S.P."/>
        </authorList>
    </citation>
    <scope>PHOSPHORYLATION [LARGE SCALE ANALYSIS] AT THR-157; TYR-159 AND SER-161</scope>
    <scope>IDENTIFICATION BY MASS SPECTROMETRY [LARGE SCALE ANALYSIS]</scope>
    <source>
        <tissue>Brain</tissue>
        <tissue>Kidney</tissue>
        <tissue>Pancreas</tissue>
        <tissue>Testis</tissue>
    </source>
</reference>
<reference key="5">
    <citation type="journal article" date="2014" name="EMBO J.">
        <title>ICK is essential for cell type-specific ciliogenesis and the regulation of ciliary transport.</title>
        <authorList>
            <person name="Chaya T."/>
            <person name="Omori Y."/>
            <person name="Kuwahara R."/>
            <person name="Furukawa T."/>
        </authorList>
    </citation>
    <scope>FUNCTION</scope>
    <scope>CATALYTIC ACTIVITY</scope>
    <scope>COFACTOR</scope>
    <scope>SUBCELLULAR LOCATION</scope>
</reference>
<reference key="6">
    <citation type="journal article" date="2014" name="PLoS ONE">
        <title>Regulation of cilium length and intraflagellar transport by the RCK-kinases ICK and MOK in renal epithelial cells.</title>
        <authorList>
            <person name="Broekhuis J.R."/>
            <person name="Verhey K.J."/>
            <person name="Jansen G."/>
        </authorList>
    </citation>
    <scope>FUNCTION</scope>
    <scope>SUBCELLULAR LOCATION</scope>
    <scope>MUTAGENESIS OF LYS-33</scope>
</reference>
<reference key="7">
    <citation type="journal article" date="2014" name="Proc. Natl. Acad. Sci. U.S.A.">
        <title>Intestinal cell kinase, a protein associated with endocrine-cerebro-osteodysplasia syndrome, is a key regulator of cilia length and Hedgehog signaling.</title>
        <authorList>
            <person name="Moon H."/>
            <person name="Song J."/>
            <person name="Shin J.O."/>
            <person name="Lee H."/>
            <person name="Kim H.K."/>
            <person name="Eggenschwiller J.T."/>
            <person name="Bok J."/>
            <person name="Ko H.W."/>
        </authorList>
    </citation>
    <scope>FUNCTION</scope>
    <scope>DISRUPTION PHENOTYPE</scope>
    <scope>SUBCELLULAR LOCATION</scope>
</reference>
<reference key="8">
    <citation type="journal article" date="2018" name="N. Engl. J. Med.">
        <title>Variant intestinal-cell kinase in juvenile myoclonic epilepsy.</title>
        <authorList>
            <person name="Bailey J.N."/>
            <person name="de Nijs L."/>
            <person name="Bai D."/>
            <person name="Suzuki T."/>
            <person name="Miyamoto H."/>
            <person name="Tanaka M."/>
            <person name="Patterson C."/>
            <person name="Lin Y.C."/>
            <person name="Medina M.T."/>
            <person name="Alonso M.E."/>
            <person name="Serratosa J.M."/>
            <person name="Duron R.M."/>
            <person name="Nguyen V.H."/>
            <person name="Wight J.E."/>
            <person name="Martinez-Juarez I.E."/>
            <person name="Ochoa A."/>
            <person name="Jara-Prado A."/>
            <person name="Guilhoto L."/>
            <person name="Molina Y."/>
            <person name="Yacubian E.M."/>
            <person name="Lopez-Ruiz M."/>
            <person name="Inoue Y."/>
            <person name="Kaneko S."/>
            <person name="Hirose S."/>
            <person name="Osawa M."/>
            <person name="Oguni H."/>
            <person name="Fujimoto S."/>
            <person name="Grisar T.M."/>
            <person name="Stern J.M."/>
            <person name="Yamakawa K."/>
            <person name="Lakaye B."/>
            <person name="Delgado-Escueta A.V."/>
        </authorList>
    </citation>
    <scope>DEVELOPMENTAL STAGE</scope>
</reference>
<evidence type="ECO:0000250" key="1">
    <source>
        <dbReference type="UniProtKB" id="P06493"/>
    </source>
</evidence>
<evidence type="ECO:0000250" key="2">
    <source>
        <dbReference type="UniProtKB" id="Q62726"/>
    </source>
</evidence>
<evidence type="ECO:0000250" key="3">
    <source>
        <dbReference type="UniProtKB" id="Q9NYX3"/>
    </source>
</evidence>
<evidence type="ECO:0000255" key="4">
    <source>
        <dbReference type="PROSITE-ProRule" id="PRU00159"/>
    </source>
</evidence>
<evidence type="ECO:0000255" key="5">
    <source>
        <dbReference type="PROSITE-ProRule" id="PRU10027"/>
    </source>
</evidence>
<evidence type="ECO:0000256" key="6">
    <source>
        <dbReference type="SAM" id="MobiDB-lite"/>
    </source>
</evidence>
<evidence type="ECO:0000269" key="7">
    <source>
    </source>
</evidence>
<evidence type="ECO:0000269" key="8">
    <source>
    </source>
</evidence>
<evidence type="ECO:0000269" key="9">
    <source>
    </source>
</evidence>
<evidence type="ECO:0000269" key="10">
    <source>
    </source>
</evidence>
<evidence type="ECO:0000269" key="11">
    <source>
    </source>
</evidence>
<evidence type="ECO:0000269" key="12">
    <source>
    </source>
</evidence>
<evidence type="ECO:0000305" key="13"/>
<evidence type="ECO:0000312" key="14">
    <source>
        <dbReference type="EMBL" id="AAF37277.1"/>
    </source>
</evidence>
<evidence type="ECO:0000312" key="15">
    <source>
        <dbReference type="EMBL" id="AAH28863.1"/>
    </source>
</evidence>
<evidence type="ECO:0007744" key="16">
    <source>
    </source>
</evidence>
<gene>
    <name type="primary">Cilk1</name>
    <name type="synonym">Ick</name>
</gene>